<sequence length="102" mass="11351">MKYLLIFLLVLAIFVISVTLGAQNDQQVTFNYLLAQGEYRISTLLAVLFAAGFAIGWLICGLFWLRVRVSLARAERKIKRLENQLSPATDVAVVPHSSAAKE</sequence>
<gene>
    <name evidence="1" type="primary">lapA</name>
    <name type="synonym">yciS</name>
    <name type="ordered locus">SF1283</name>
    <name type="ordered locus">S1366</name>
</gene>
<evidence type="ECO:0000255" key="1">
    <source>
        <dbReference type="HAMAP-Rule" id="MF_01948"/>
    </source>
</evidence>
<proteinExistence type="inferred from homology"/>
<feature type="chain" id="PRO_0000168887" description="Lipopolysaccharide assembly protein A">
    <location>
        <begin position="1"/>
        <end position="102"/>
    </location>
</feature>
<feature type="transmembrane region" description="Helical" evidence="1">
    <location>
        <begin position="3"/>
        <end position="23"/>
    </location>
</feature>
<feature type="transmembrane region" description="Helical" evidence="1">
    <location>
        <begin position="44"/>
        <end position="64"/>
    </location>
</feature>
<feature type="coiled-coil region" evidence="1">
    <location>
        <begin position="64"/>
        <end position="92"/>
    </location>
</feature>
<reference key="1">
    <citation type="journal article" date="2002" name="Nucleic Acids Res.">
        <title>Genome sequence of Shigella flexneri 2a: insights into pathogenicity through comparison with genomes of Escherichia coli K12 and O157.</title>
        <authorList>
            <person name="Jin Q."/>
            <person name="Yuan Z."/>
            <person name="Xu J."/>
            <person name="Wang Y."/>
            <person name="Shen Y."/>
            <person name="Lu W."/>
            <person name="Wang J."/>
            <person name="Liu H."/>
            <person name="Yang J."/>
            <person name="Yang F."/>
            <person name="Zhang X."/>
            <person name="Zhang J."/>
            <person name="Yang G."/>
            <person name="Wu H."/>
            <person name="Qu D."/>
            <person name="Dong J."/>
            <person name="Sun L."/>
            <person name="Xue Y."/>
            <person name="Zhao A."/>
            <person name="Gao Y."/>
            <person name="Zhu J."/>
            <person name="Kan B."/>
            <person name="Ding K."/>
            <person name="Chen S."/>
            <person name="Cheng H."/>
            <person name="Yao Z."/>
            <person name="He B."/>
            <person name="Chen R."/>
            <person name="Ma D."/>
            <person name="Qiang B."/>
            <person name="Wen Y."/>
            <person name="Hou Y."/>
            <person name="Yu J."/>
        </authorList>
    </citation>
    <scope>NUCLEOTIDE SEQUENCE [LARGE SCALE GENOMIC DNA]</scope>
    <source>
        <strain>301 / Serotype 2a</strain>
    </source>
</reference>
<reference key="2">
    <citation type="journal article" date="2003" name="Infect. Immun.">
        <title>Complete genome sequence and comparative genomics of Shigella flexneri serotype 2a strain 2457T.</title>
        <authorList>
            <person name="Wei J."/>
            <person name="Goldberg M.B."/>
            <person name="Burland V."/>
            <person name="Venkatesan M.M."/>
            <person name="Deng W."/>
            <person name="Fournier G."/>
            <person name="Mayhew G.F."/>
            <person name="Plunkett G. III"/>
            <person name="Rose D.J."/>
            <person name="Darling A."/>
            <person name="Mau B."/>
            <person name="Perna N.T."/>
            <person name="Payne S.M."/>
            <person name="Runyen-Janecky L.J."/>
            <person name="Zhou S."/>
            <person name="Schwartz D.C."/>
            <person name="Blattner F.R."/>
        </authorList>
    </citation>
    <scope>NUCLEOTIDE SEQUENCE [LARGE SCALE GENOMIC DNA]</scope>
    <source>
        <strain>ATCC 700930 / 2457T / Serotype 2a</strain>
    </source>
</reference>
<dbReference type="EMBL" id="AE005674">
    <property type="protein sequence ID" value="AAN42895.1"/>
    <property type="molecule type" value="Genomic_DNA"/>
</dbReference>
<dbReference type="EMBL" id="AE014073">
    <property type="protein sequence ID" value="AAP16779.1"/>
    <property type="molecule type" value="Genomic_DNA"/>
</dbReference>
<dbReference type="RefSeq" id="NP_707188.1">
    <property type="nucleotide sequence ID" value="NC_004337.2"/>
</dbReference>
<dbReference type="RefSeq" id="WP_000876286.1">
    <property type="nucleotide sequence ID" value="NZ_WPGW01000009.1"/>
</dbReference>
<dbReference type="SMR" id="P0ACV5"/>
<dbReference type="STRING" id="198214.SF1283"/>
<dbReference type="PaxDb" id="198214-SF1283"/>
<dbReference type="GeneID" id="1026325"/>
<dbReference type="GeneID" id="75203392"/>
<dbReference type="KEGG" id="sfl:SF1283"/>
<dbReference type="KEGG" id="sfx:S1366"/>
<dbReference type="PATRIC" id="fig|198214.7.peg.1504"/>
<dbReference type="HOGENOM" id="CLU_160072_0_0_6"/>
<dbReference type="Proteomes" id="UP000001006">
    <property type="component" value="Chromosome"/>
</dbReference>
<dbReference type="Proteomes" id="UP000002673">
    <property type="component" value="Chromosome"/>
</dbReference>
<dbReference type="GO" id="GO:0005886">
    <property type="term" value="C:plasma membrane"/>
    <property type="evidence" value="ECO:0007669"/>
    <property type="project" value="UniProtKB-SubCell"/>
</dbReference>
<dbReference type="GO" id="GO:0008653">
    <property type="term" value="P:lipopolysaccharide metabolic process"/>
    <property type="evidence" value="ECO:0007669"/>
    <property type="project" value="InterPro"/>
</dbReference>
<dbReference type="HAMAP" id="MF_01948">
    <property type="entry name" value="LPS_assembly_LapA"/>
    <property type="match status" value="1"/>
</dbReference>
<dbReference type="InterPro" id="IPR032906">
    <property type="entry name" value="LapA"/>
</dbReference>
<dbReference type="InterPro" id="IPR010445">
    <property type="entry name" value="LapA_dom"/>
</dbReference>
<dbReference type="Pfam" id="PF06305">
    <property type="entry name" value="LapA_dom"/>
    <property type="match status" value="1"/>
</dbReference>
<organism>
    <name type="scientific">Shigella flexneri</name>
    <dbReference type="NCBI Taxonomy" id="623"/>
    <lineage>
        <taxon>Bacteria</taxon>
        <taxon>Pseudomonadati</taxon>
        <taxon>Pseudomonadota</taxon>
        <taxon>Gammaproteobacteria</taxon>
        <taxon>Enterobacterales</taxon>
        <taxon>Enterobacteriaceae</taxon>
        <taxon>Shigella</taxon>
    </lineage>
</organism>
<name>LAPA_SHIFL</name>
<accession>P0ACV5</accession>
<accession>P77614</accession>
<comment type="function">
    <text evidence="1">Involved in the assembly of lipopolysaccharide (LPS).</text>
</comment>
<comment type="subcellular location">
    <subcellularLocation>
        <location evidence="1">Cell inner membrane</location>
        <topology evidence="1">Multi-pass membrane protein</topology>
    </subcellularLocation>
</comment>
<comment type="similarity">
    <text evidence="1">Belongs to the LapA family.</text>
</comment>
<keyword id="KW-0997">Cell inner membrane</keyword>
<keyword id="KW-1003">Cell membrane</keyword>
<keyword id="KW-0175">Coiled coil</keyword>
<keyword id="KW-0472">Membrane</keyword>
<keyword id="KW-1185">Reference proteome</keyword>
<keyword id="KW-0812">Transmembrane</keyword>
<keyword id="KW-1133">Transmembrane helix</keyword>
<protein>
    <recommendedName>
        <fullName evidence="1">Lipopolysaccharide assembly protein A</fullName>
    </recommendedName>
</protein>